<gene>
    <name evidence="1" type="primary">prfA</name>
    <name type="ordered locus">MS1192</name>
</gene>
<accession>Q65TB1</accession>
<feature type="chain" id="PRO_0000177696" description="Peptide chain release factor 1">
    <location>
        <begin position="1"/>
        <end position="360"/>
    </location>
</feature>
<feature type="modified residue" description="N5-methylglutamine" evidence="1">
    <location>
        <position position="235"/>
    </location>
</feature>
<dbReference type="EMBL" id="AE016827">
    <property type="protein sequence ID" value="AAU37799.1"/>
    <property type="molecule type" value="Genomic_DNA"/>
</dbReference>
<dbReference type="RefSeq" id="WP_011200366.1">
    <property type="nucleotide sequence ID" value="NC_006300.1"/>
</dbReference>
<dbReference type="SMR" id="Q65TB1"/>
<dbReference type="STRING" id="221988.MS1192"/>
<dbReference type="KEGG" id="msu:MS1192"/>
<dbReference type="eggNOG" id="COG0216">
    <property type="taxonomic scope" value="Bacteria"/>
</dbReference>
<dbReference type="HOGENOM" id="CLU_036856_0_1_6"/>
<dbReference type="OrthoDB" id="9806673at2"/>
<dbReference type="Proteomes" id="UP000000607">
    <property type="component" value="Chromosome"/>
</dbReference>
<dbReference type="GO" id="GO:0005737">
    <property type="term" value="C:cytoplasm"/>
    <property type="evidence" value="ECO:0007669"/>
    <property type="project" value="UniProtKB-SubCell"/>
</dbReference>
<dbReference type="GO" id="GO:0016149">
    <property type="term" value="F:translation release factor activity, codon specific"/>
    <property type="evidence" value="ECO:0007669"/>
    <property type="project" value="UniProtKB-UniRule"/>
</dbReference>
<dbReference type="FunFam" id="3.30.160.20:FF:000004">
    <property type="entry name" value="Peptide chain release factor 1"/>
    <property type="match status" value="1"/>
</dbReference>
<dbReference type="FunFam" id="3.30.70.1660:FF:000002">
    <property type="entry name" value="Peptide chain release factor 1"/>
    <property type="match status" value="1"/>
</dbReference>
<dbReference type="FunFam" id="3.30.70.1660:FF:000004">
    <property type="entry name" value="Peptide chain release factor 1"/>
    <property type="match status" value="1"/>
</dbReference>
<dbReference type="Gene3D" id="3.30.160.20">
    <property type="match status" value="1"/>
</dbReference>
<dbReference type="Gene3D" id="3.30.70.1660">
    <property type="match status" value="1"/>
</dbReference>
<dbReference type="Gene3D" id="6.10.140.1950">
    <property type="match status" value="1"/>
</dbReference>
<dbReference type="HAMAP" id="MF_00093">
    <property type="entry name" value="Rel_fac_1"/>
    <property type="match status" value="1"/>
</dbReference>
<dbReference type="InterPro" id="IPR005139">
    <property type="entry name" value="PCRF"/>
</dbReference>
<dbReference type="InterPro" id="IPR000352">
    <property type="entry name" value="Pep_chain_release_fac_I"/>
</dbReference>
<dbReference type="InterPro" id="IPR045853">
    <property type="entry name" value="Pep_chain_release_fac_I_sf"/>
</dbReference>
<dbReference type="InterPro" id="IPR050057">
    <property type="entry name" value="Prokaryotic/Mito_RF"/>
</dbReference>
<dbReference type="InterPro" id="IPR004373">
    <property type="entry name" value="RF-1"/>
</dbReference>
<dbReference type="NCBIfam" id="TIGR00019">
    <property type="entry name" value="prfA"/>
    <property type="match status" value="1"/>
</dbReference>
<dbReference type="NCBIfam" id="NF001859">
    <property type="entry name" value="PRK00591.1"/>
    <property type="match status" value="1"/>
</dbReference>
<dbReference type="PANTHER" id="PTHR43804">
    <property type="entry name" value="LD18447P"/>
    <property type="match status" value="1"/>
</dbReference>
<dbReference type="PANTHER" id="PTHR43804:SF7">
    <property type="entry name" value="LD18447P"/>
    <property type="match status" value="1"/>
</dbReference>
<dbReference type="Pfam" id="PF03462">
    <property type="entry name" value="PCRF"/>
    <property type="match status" value="1"/>
</dbReference>
<dbReference type="Pfam" id="PF00472">
    <property type="entry name" value="RF-1"/>
    <property type="match status" value="1"/>
</dbReference>
<dbReference type="SMART" id="SM00937">
    <property type="entry name" value="PCRF"/>
    <property type="match status" value="1"/>
</dbReference>
<dbReference type="SUPFAM" id="SSF75620">
    <property type="entry name" value="Release factor"/>
    <property type="match status" value="1"/>
</dbReference>
<dbReference type="PROSITE" id="PS00745">
    <property type="entry name" value="RF_PROK_I"/>
    <property type="match status" value="1"/>
</dbReference>
<name>RF1_MANSM</name>
<reference key="1">
    <citation type="journal article" date="2004" name="Nat. Biotechnol.">
        <title>The genome sequence of the capnophilic rumen bacterium Mannheimia succiniciproducens.</title>
        <authorList>
            <person name="Hong S.H."/>
            <person name="Kim J.S."/>
            <person name="Lee S.Y."/>
            <person name="In Y.H."/>
            <person name="Choi S.S."/>
            <person name="Rih J.-K."/>
            <person name="Kim C.H."/>
            <person name="Jeong H."/>
            <person name="Hur C.G."/>
            <person name="Kim J.J."/>
        </authorList>
    </citation>
    <scope>NUCLEOTIDE SEQUENCE [LARGE SCALE GENOMIC DNA]</scope>
    <source>
        <strain>KCTC 0769BP / MBEL55E</strain>
    </source>
</reference>
<proteinExistence type="inferred from homology"/>
<evidence type="ECO:0000255" key="1">
    <source>
        <dbReference type="HAMAP-Rule" id="MF_00093"/>
    </source>
</evidence>
<sequence length="360" mass="40767">MKPSIISKLDSLNERYEELEALLGDASVISDQDKFRAYSKEYSQLEEVVKTFSRWKQLNSNIEEAELLLDDPEMKEMAQMEIEESKNELEEVEQHLQILLLPRDPNDEYNAYLEIRAGTGGDEAGIFAGDLFRMYSRYAEMKRWRVEVLSENESEQGGYKEIIALVSGDNVYGQLKFESGGHRVQRVPKTESQGRIHTSACTVAVMPELPESEMPEINPADLRIDTYRASGAGGQHINKTDSAVRITHIPTGMVVECQDERSQHKNKAKALAVLASRLVQAEQDKLAAEQATTRRNLLGSGDRSDKIRTYNYPQGRVTDHRINLTVYRLDEVMNGKIDELIQPIITEYQADQLAALSDQP</sequence>
<keyword id="KW-0963">Cytoplasm</keyword>
<keyword id="KW-0488">Methylation</keyword>
<keyword id="KW-0648">Protein biosynthesis</keyword>
<protein>
    <recommendedName>
        <fullName evidence="1">Peptide chain release factor 1</fullName>
        <shortName evidence="1">RF-1</shortName>
    </recommendedName>
</protein>
<comment type="function">
    <text evidence="1">Peptide chain release factor 1 directs the termination of translation in response to the peptide chain termination codons UAG and UAA.</text>
</comment>
<comment type="subcellular location">
    <subcellularLocation>
        <location evidence="1">Cytoplasm</location>
    </subcellularLocation>
</comment>
<comment type="PTM">
    <text evidence="1">Methylated by PrmC. Methylation increases the termination efficiency of RF1.</text>
</comment>
<comment type="similarity">
    <text evidence="1">Belongs to the prokaryotic/mitochondrial release factor family.</text>
</comment>
<organism>
    <name type="scientific">Mannheimia succiniciproducens (strain KCTC 0769BP / MBEL55E)</name>
    <dbReference type="NCBI Taxonomy" id="221988"/>
    <lineage>
        <taxon>Bacteria</taxon>
        <taxon>Pseudomonadati</taxon>
        <taxon>Pseudomonadota</taxon>
        <taxon>Gammaproteobacteria</taxon>
        <taxon>Pasteurellales</taxon>
        <taxon>Pasteurellaceae</taxon>
        <taxon>Basfia</taxon>
    </lineage>
</organism>